<geneLocation type="chloroplast"/>
<name>CEMA_POPAL</name>
<organism>
    <name type="scientific">Populus alba</name>
    <name type="common">White poplar</name>
    <dbReference type="NCBI Taxonomy" id="43335"/>
    <lineage>
        <taxon>Eukaryota</taxon>
        <taxon>Viridiplantae</taxon>
        <taxon>Streptophyta</taxon>
        <taxon>Embryophyta</taxon>
        <taxon>Tracheophyta</taxon>
        <taxon>Spermatophyta</taxon>
        <taxon>Magnoliopsida</taxon>
        <taxon>eudicotyledons</taxon>
        <taxon>Gunneridae</taxon>
        <taxon>Pentapetalae</taxon>
        <taxon>rosids</taxon>
        <taxon>fabids</taxon>
        <taxon>Malpighiales</taxon>
        <taxon>Salicaceae</taxon>
        <taxon>Saliceae</taxon>
        <taxon>Populus</taxon>
    </lineage>
</organism>
<feature type="chain" id="PRO_0000275249" description="Potassium/proton antiporter CemA">
    <location>
        <begin position="1"/>
        <end position="228"/>
    </location>
</feature>
<feature type="transmembrane region" description="Helical" evidence="1">
    <location>
        <begin position="6"/>
        <end position="26"/>
    </location>
</feature>
<feature type="transmembrane region" description="Helical" evidence="1">
    <location>
        <begin position="113"/>
        <end position="133"/>
    </location>
</feature>
<feature type="transmembrane region" description="Helical" evidence="1">
    <location>
        <begin position="188"/>
        <end position="208"/>
    </location>
</feature>
<accession>Q14FE5</accession>
<dbReference type="EMBL" id="AP008956">
    <property type="protein sequence ID" value="BAE97217.1"/>
    <property type="molecule type" value="Genomic_DNA"/>
</dbReference>
<dbReference type="RefSeq" id="YP_665570.1">
    <property type="nucleotide sequence ID" value="NC_008235.1"/>
</dbReference>
<dbReference type="GeneID" id="4178200"/>
<dbReference type="KEGG" id="palz:4178200"/>
<dbReference type="OrthoDB" id="6664at3646"/>
<dbReference type="GO" id="GO:0009706">
    <property type="term" value="C:chloroplast inner membrane"/>
    <property type="evidence" value="ECO:0007669"/>
    <property type="project" value="UniProtKB-SubCell"/>
</dbReference>
<dbReference type="GO" id="GO:0015297">
    <property type="term" value="F:antiporter activity"/>
    <property type="evidence" value="ECO:0007669"/>
    <property type="project" value="UniProtKB-KW"/>
</dbReference>
<dbReference type="GO" id="GO:0015078">
    <property type="term" value="F:proton transmembrane transporter activity"/>
    <property type="evidence" value="ECO:0007669"/>
    <property type="project" value="UniProtKB-UniRule"/>
</dbReference>
<dbReference type="GO" id="GO:0006813">
    <property type="term" value="P:potassium ion transport"/>
    <property type="evidence" value="ECO:0007669"/>
    <property type="project" value="UniProtKB-UniRule"/>
</dbReference>
<dbReference type="HAMAP" id="MF_01308">
    <property type="entry name" value="CemA_PxcA"/>
    <property type="match status" value="1"/>
</dbReference>
<dbReference type="InterPro" id="IPR004282">
    <property type="entry name" value="CemA"/>
</dbReference>
<dbReference type="PANTHER" id="PTHR33650:SF2">
    <property type="entry name" value="CHLOROPLAST ENVELOPE MEMBRANE PROTEIN"/>
    <property type="match status" value="1"/>
</dbReference>
<dbReference type="PANTHER" id="PTHR33650">
    <property type="entry name" value="CHLOROPLAST ENVELOPE MEMBRANE PROTEIN-RELATED"/>
    <property type="match status" value="1"/>
</dbReference>
<dbReference type="Pfam" id="PF03040">
    <property type="entry name" value="CemA"/>
    <property type="match status" value="1"/>
</dbReference>
<evidence type="ECO:0000255" key="1">
    <source>
        <dbReference type="HAMAP-Rule" id="MF_01308"/>
    </source>
</evidence>
<evidence type="ECO:0000305" key="2"/>
<reference key="1">
    <citation type="submission" date="2005-03" db="EMBL/GenBank/DDBJ databases">
        <title>Complete structure of the chloroplast genome of Populus alba.</title>
        <authorList>
            <person name="Okumura S."/>
            <person name="Yamashita A."/>
            <person name="Kanamoto H."/>
            <person name="Hattori M."/>
            <person name="Takase H."/>
            <person name="Tomizawa K."/>
        </authorList>
    </citation>
    <scope>NUCLEOTIDE SEQUENCE [LARGE SCALE GENOMIC DNA]</scope>
</reference>
<comment type="function">
    <text evidence="1">Contributes to K(+)/H(+) antiport activity by supporting proton efflux to control proton extrusion and homeostasis in chloroplasts in a light-dependent manner to modulate photosynthesis. Prevents excessive induction of non-photochemical quenching (NPQ) under continuous-light conditions. Indirectly promotes efficient inorganic carbon uptake into chloroplasts.</text>
</comment>
<comment type="catalytic activity">
    <reaction evidence="1">
        <text>K(+)(in) + H(+)(out) = K(+)(out) + H(+)(in)</text>
        <dbReference type="Rhea" id="RHEA:29467"/>
        <dbReference type="ChEBI" id="CHEBI:15378"/>
        <dbReference type="ChEBI" id="CHEBI:29103"/>
    </reaction>
</comment>
<comment type="subcellular location">
    <subcellularLocation>
        <location evidence="1">Plastid</location>
        <location evidence="1">Chloroplast inner membrane</location>
        <topology evidence="1">Multi-pass membrane protein</topology>
    </subcellularLocation>
</comment>
<comment type="similarity">
    <text evidence="1 2">Belongs to the CemA family.</text>
</comment>
<sequence>MEKKAFIPLLYLTSIVFLPWWVSFSFNKSLGSWIINWWNTSKSETFLNDIQEKSILEKLIEFEELFLLDEMIKEYPETHLQKFRIGIHKETIQLIKMHNADRIDTILHFSTNIICFVILSGYSFLVNEELFILNSWVQEFIYNLSDTIKALSILLLTDLCIGFHSPHGWELMISSFYKDFGFAHNDQIISGLVSTFPVIFDTIFKYWIFRYLNRVSPSLVVIYHSMND</sequence>
<proteinExistence type="inferred from homology"/>
<gene>
    <name evidence="1" type="primary">cemA</name>
</gene>
<keyword id="KW-0050">Antiport</keyword>
<keyword id="KW-0150">Chloroplast</keyword>
<keyword id="KW-0375">Hydrogen ion transport</keyword>
<keyword id="KW-0406">Ion transport</keyword>
<keyword id="KW-0472">Membrane</keyword>
<keyword id="KW-0934">Plastid</keyword>
<keyword id="KW-1001">Plastid inner membrane</keyword>
<keyword id="KW-0630">Potassium</keyword>
<keyword id="KW-0633">Potassium transport</keyword>
<keyword id="KW-0812">Transmembrane</keyword>
<keyword id="KW-1133">Transmembrane helix</keyword>
<keyword id="KW-0813">Transport</keyword>
<protein>
    <recommendedName>
        <fullName evidence="1">Potassium/proton antiporter CemA</fullName>
    </recommendedName>
    <alternativeName>
        <fullName evidence="1">Chloroplast envelope membrane protein A</fullName>
        <shortName evidence="1">CemA</shortName>
    </alternativeName>
</protein>